<proteinExistence type="evidence at protein level"/>
<evidence type="ECO:0000250" key="1">
    <source>
        <dbReference type="UniProtKB" id="P40350"/>
    </source>
</evidence>
<evidence type="ECO:0000255" key="2"/>
<evidence type="ECO:0000269" key="3">
    <source>
    </source>
</evidence>
<evidence type="ECO:0000303" key="4">
    <source>
    </source>
</evidence>
<evidence type="ECO:0000303" key="5">
    <source>
    </source>
</evidence>
<evidence type="ECO:0000305" key="6"/>
<evidence type="ECO:0000305" key="7">
    <source>
    </source>
</evidence>
<comment type="function">
    <text evidence="3">Dolichyl-phosphate beta-glucosyltransferase involved in the glycosylation of glycoproteins through the synthesis of dolichyl beta-D-glucosyl phosphate which serves as a sugar donor for transfer of three glucose residues to the Man-9-GlcNAc-2-PP-dolichol precursor to N-glycans.</text>
</comment>
<comment type="catalytic activity">
    <reaction evidence="3">
        <text>a di-trans,poly-cis-dolichyl phosphate + UDP-alpha-D-glucose = a di-trans,poly-cis-dolichyl beta-D-glucosyl phosphate + UDP</text>
        <dbReference type="Rhea" id="RHEA:15401"/>
        <dbReference type="Rhea" id="RHEA-COMP:19498"/>
        <dbReference type="Rhea" id="RHEA-COMP:19502"/>
        <dbReference type="ChEBI" id="CHEBI:57525"/>
        <dbReference type="ChEBI" id="CHEBI:57683"/>
        <dbReference type="ChEBI" id="CHEBI:58223"/>
        <dbReference type="ChEBI" id="CHEBI:58885"/>
        <dbReference type="EC" id="2.4.1.117"/>
    </reaction>
    <physiologicalReaction direction="left-to-right" evidence="7">
        <dbReference type="Rhea" id="RHEA:15402"/>
    </physiologicalReaction>
</comment>
<comment type="pathway">
    <text evidence="3">Protein modification; protein glycosylation.</text>
</comment>
<comment type="subcellular location">
    <subcellularLocation>
        <location evidence="1">Endoplasmic reticulum membrane</location>
        <topology evidence="2">Single-pass membrane protein</topology>
    </subcellularLocation>
</comment>
<comment type="similarity">
    <text evidence="6">Belongs to the glycosyltransferase 2 family.</text>
</comment>
<dbReference type="EC" id="2.4.1.117" evidence="3"/>
<dbReference type="EMBL" id="DS113273">
    <property type="protein sequence ID" value="EAY14277.1"/>
    <property type="molecule type" value="Genomic_DNA"/>
</dbReference>
<dbReference type="RefSeq" id="XP_001326500.1">
    <property type="nucleotide sequence ID" value="XM_001326465.1"/>
</dbReference>
<dbReference type="SMR" id="A2DZE8"/>
<dbReference type="FunCoup" id="A2DZE8">
    <property type="interactions" value="465"/>
</dbReference>
<dbReference type="STRING" id="5722.A2DZE8"/>
<dbReference type="KEGG" id="tva:TVAG_2v1016790"/>
<dbReference type="VEuPathDB" id="TrichDB:TVAG_487200"/>
<dbReference type="VEuPathDB" id="TrichDB:TVAGG3_1016790"/>
<dbReference type="eggNOG" id="KOG2977">
    <property type="taxonomic scope" value="Eukaryota"/>
</dbReference>
<dbReference type="InParanoid" id="A2DZE8"/>
<dbReference type="OMA" id="PVYDTQC"/>
<dbReference type="OrthoDB" id="3784at2759"/>
<dbReference type="UniPathway" id="UPA00378"/>
<dbReference type="Proteomes" id="UP000001542">
    <property type="component" value="Unassembled WGS sequence"/>
</dbReference>
<dbReference type="GO" id="GO:0005789">
    <property type="term" value="C:endoplasmic reticulum membrane"/>
    <property type="evidence" value="ECO:0000318"/>
    <property type="project" value="GO_Central"/>
</dbReference>
<dbReference type="GO" id="GO:0004581">
    <property type="term" value="F:dolichyl-phosphate beta-glucosyltransferase activity"/>
    <property type="evidence" value="ECO:0007669"/>
    <property type="project" value="UniProtKB-EC"/>
</dbReference>
<dbReference type="GO" id="GO:0006487">
    <property type="term" value="P:protein N-linked glycosylation"/>
    <property type="evidence" value="ECO:0000318"/>
    <property type="project" value="GO_Central"/>
</dbReference>
<dbReference type="CDD" id="cd04188">
    <property type="entry name" value="DPG_synthase"/>
    <property type="match status" value="1"/>
</dbReference>
<dbReference type="FunFam" id="3.90.550.10:FF:000303">
    <property type="entry name" value="Dolichyl-phosphate beta-glucosyltransferase ALG5D"/>
    <property type="match status" value="1"/>
</dbReference>
<dbReference type="Gene3D" id="3.90.550.10">
    <property type="entry name" value="Spore Coat Polysaccharide Biosynthesis Protein SpsA, Chain A"/>
    <property type="match status" value="1"/>
</dbReference>
<dbReference type="InterPro" id="IPR035518">
    <property type="entry name" value="DPG_synthase"/>
</dbReference>
<dbReference type="InterPro" id="IPR001173">
    <property type="entry name" value="Glyco_trans_2-like"/>
</dbReference>
<dbReference type="InterPro" id="IPR029044">
    <property type="entry name" value="Nucleotide-diphossugar_trans"/>
</dbReference>
<dbReference type="PANTHER" id="PTHR10859:SF91">
    <property type="entry name" value="DOLICHYL-PHOSPHATE BETA-GLUCOSYLTRANSFERASE"/>
    <property type="match status" value="1"/>
</dbReference>
<dbReference type="PANTHER" id="PTHR10859">
    <property type="entry name" value="GLYCOSYL TRANSFERASE"/>
    <property type="match status" value="1"/>
</dbReference>
<dbReference type="Pfam" id="PF00535">
    <property type="entry name" value="Glycos_transf_2"/>
    <property type="match status" value="1"/>
</dbReference>
<dbReference type="SUPFAM" id="SSF53448">
    <property type="entry name" value="Nucleotide-diphospho-sugar transferases"/>
    <property type="match status" value="1"/>
</dbReference>
<reference key="1">
    <citation type="journal article" date="2007" name="Science">
        <title>Draft genome sequence of the sexually transmitted pathogen Trichomonas vaginalis.</title>
        <authorList>
            <person name="Carlton J.M."/>
            <person name="Hirt R.P."/>
            <person name="Silva J.C."/>
            <person name="Delcher A.L."/>
            <person name="Schatz M."/>
            <person name="Zhao Q."/>
            <person name="Wortman J.R."/>
            <person name="Bidwell S.L."/>
            <person name="Alsmark U.C.M."/>
            <person name="Besteiro S."/>
            <person name="Sicheritz-Ponten T."/>
            <person name="Noel C.J."/>
            <person name="Dacks J.B."/>
            <person name="Foster P.G."/>
            <person name="Simillion C."/>
            <person name="Van de Peer Y."/>
            <person name="Miranda-Saavedra D."/>
            <person name="Barton G.J."/>
            <person name="Westrop G.D."/>
            <person name="Mueller S."/>
            <person name="Dessi D."/>
            <person name="Fiori P.L."/>
            <person name="Ren Q."/>
            <person name="Paulsen I."/>
            <person name="Zhang H."/>
            <person name="Bastida-Corcuera F.D."/>
            <person name="Simoes-Barbosa A."/>
            <person name="Brown M.T."/>
            <person name="Hayes R.D."/>
            <person name="Mukherjee M."/>
            <person name="Okumura C.Y."/>
            <person name="Schneider R."/>
            <person name="Smith A.J."/>
            <person name="Vanacova S."/>
            <person name="Villalvazo M."/>
            <person name="Haas B.J."/>
            <person name="Pertea M."/>
            <person name="Feldblyum T.V."/>
            <person name="Utterback T.R."/>
            <person name="Shu C.L."/>
            <person name="Osoegawa K."/>
            <person name="de Jong P.J."/>
            <person name="Hrdy I."/>
            <person name="Horvathova L."/>
            <person name="Zubacova Z."/>
            <person name="Dolezal P."/>
            <person name="Malik S.B."/>
            <person name="Logsdon J.M. Jr."/>
            <person name="Henze K."/>
            <person name="Gupta A."/>
            <person name="Wang C.C."/>
            <person name="Dunne R.L."/>
            <person name="Upcroft J.A."/>
            <person name="Upcroft P."/>
            <person name="White O."/>
            <person name="Salzberg S.L."/>
            <person name="Tang P."/>
            <person name="Chiu C.-H."/>
            <person name="Lee Y.-S."/>
            <person name="Embley T.M."/>
            <person name="Coombs G.H."/>
            <person name="Mottram J.C."/>
            <person name="Tachezy J."/>
            <person name="Fraser-Liggett C.M."/>
            <person name="Johnson P.J."/>
        </authorList>
    </citation>
    <scope>NUCLEOTIDE SEQUENCE [LARGE SCALE GENOMIC DNA]</scope>
    <source>
        <strain>ATCC PRA-98 / G3</strain>
    </source>
</reference>
<reference key="2">
    <citation type="journal article" date="2008" name="Eukaryot. Cell">
        <title>Dolichyl-phosphate-glucose is used to make O-glycans on glycoproteins of Trichomonas vaginalis.</title>
        <authorList>
            <person name="Grabinska K.A."/>
            <person name="Ghosh S.K."/>
            <person name="Guan Z."/>
            <person name="Cui J."/>
            <person name="Raetz C.R."/>
            <person name="Robbins P.W."/>
            <person name="Samuelson J."/>
        </authorList>
    </citation>
    <scope>FUNCTION</scope>
    <scope>CATALYTIC ACTIVITY</scope>
    <scope>PATHWAY</scope>
</reference>
<feature type="chain" id="PRO_0000431405" description="Dolichyl-phosphate beta-glucosyltransferase ALG5A">
    <location>
        <begin position="1"/>
        <end position="323"/>
    </location>
</feature>
<feature type="topological domain" description="Lumenal" evidence="6">
    <location>
        <begin position="1"/>
        <end position="5"/>
    </location>
</feature>
<feature type="transmembrane region" description="Helical" evidence="2">
    <location>
        <begin position="6"/>
        <end position="26"/>
    </location>
</feature>
<feature type="topological domain" description="Cytoplasmic" evidence="6">
    <location>
        <begin position="27"/>
        <end position="323"/>
    </location>
</feature>
<accession>A2DZE8</accession>
<keyword id="KW-0256">Endoplasmic reticulum</keyword>
<keyword id="KW-0328">Glycosyltransferase</keyword>
<keyword id="KW-0472">Membrane</keyword>
<keyword id="KW-1185">Reference proteome</keyword>
<keyword id="KW-0735">Signal-anchor</keyword>
<keyword id="KW-0808">Transferase</keyword>
<keyword id="KW-0812">Transmembrane</keyword>
<keyword id="KW-1133">Transmembrane helix</keyword>
<sequence>MKFWRFVQILFFLGVAAVGLVVAVMIANADDTTLFDRMQLPDGDPNKLNYYIQPAPNGNEKVPFPTIFDPASVYLSLVVPAYNEEKRLPKMLDETLNYLKSREEKDKSFTWEIVIVNDGSKDKTKEVVLNYAKEYPNIFLLNQPVNMGKGAAIQAGCLHVRGELVLMLDADGATKIDDFEVLEKEIKSLMKTTNQAIVIGSRAQNEKAKRTPLRKFLSIGMHTLIVLSGVHGIRDTQCGFKLFTRESCKMIFMNQHVQRWCCDPEILVIARRLGMKISELPVEWNEIDGSKMKISGMIKMATDLIKIAIFHRVGAWKIRDRRH</sequence>
<gene>
    <name evidence="5" type="primary">ALG5A</name>
    <name evidence="4" type="ORF">TVAG_487200</name>
</gene>
<name>ALG5A_TRIV3</name>
<protein>
    <recommendedName>
        <fullName evidence="5">Dolichyl-phosphate beta-glucosyltransferase ALG5A</fullName>
        <shortName>DolP-glucosyltransferase</shortName>
        <ecNumber evidence="3">2.4.1.117</ecNumber>
    </recommendedName>
</protein>
<organism>
    <name type="scientific">Trichomonas vaginalis (strain ATCC PRA-98 / G3)</name>
    <dbReference type="NCBI Taxonomy" id="412133"/>
    <lineage>
        <taxon>Eukaryota</taxon>
        <taxon>Metamonada</taxon>
        <taxon>Parabasalia</taxon>
        <taxon>Trichomonadida</taxon>
        <taxon>Trichomonadidae</taxon>
        <taxon>Trichomonas</taxon>
    </lineage>
</organism>